<dbReference type="EC" id="3.1.13.-" evidence="1"/>
<dbReference type="EMBL" id="U06949">
    <property type="protein sequence ID" value="AAA21572.1"/>
    <property type="molecule type" value="Genomic_DNA"/>
</dbReference>
<dbReference type="EMBL" id="BA000031">
    <property type="protein sequence ID" value="BAC60377.1"/>
    <property type="molecule type" value="Genomic_DNA"/>
</dbReference>
<dbReference type="RefSeq" id="NP_798493.1">
    <property type="nucleotide sequence ID" value="NC_004603.1"/>
</dbReference>
<dbReference type="RefSeq" id="WP_005490636.1">
    <property type="nucleotide sequence ID" value="NC_004603.1"/>
</dbReference>
<dbReference type="SMR" id="P46232"/>
<dbReference type="GeneID" id="1189626"/>
<dbReference type="KEGG" id="vpa:VP2114"/>
<dbReference type="PATRIC" id="fig|223926.6.peg.2022"/>
<dbReference type="eggNOG" id="COG0847">
    <property type="taxonomic scope" value="Bacteria"/>
</dbReference>
<dbReference type="HOGENOM" id="CLU_082724_0_0_6"/>
<dbReference type="Proteomes" id="UP000002493">
    <property type="component" value="Chromosome 1"/>
</dbReference>
<dbReference type="GO" id="GO:0005829">
    <property type="term" value="C:cytosol"/>
    <property type="evidence" value="ECO:0007669"/>
    <property type="project" value="TreeGrafter"/>
</dbReference>
<dbReference type="GO" id="GO:0008408">
    <property type="term" value="F:3'-5' exonuclease activity"/>
    <property type="evidence" value="ECO:0007669"/>
    <property type="project" value="TreeGrafter"/>
</dbReference>
<dbReference type="GO" id="GO:0000287">
    <property type="term" value="F:magnesium ion binding"/>
    <property type="evidence" value="ECO:0007669"/>
    <property type="project" value="UniProtKB-UniRule"/>
</dbReference>
<dbReference type="GO" id="GO:0003676">
    <property type="term" value="F:nucleic acid binding"/>
    <property type="evidence" value="ECO:0007669"/>
    <property type="project" value="InterPro"/>
</dbReference>
<dbReference type="GO" id="GO:0016896">
    <property type="term" value="F:RNA exonuclease activity, producing 5'-phosphomonoesters"/>
    <property type="evidence" value="ECO:0007669"/>
    <property type="project" value="UniProtKB-UniRule"/>
</dbReference>
<dbReference type="GO" id="GO:0045004">
    <property type="term" value="P:DNA replication proofreading"/>
    <property type="evidence" value="ECO:0007669"/>
    <property type="project" value="TreeGrafter"/>
</dbReference>
<dbReference type="GO" id="GO:0008033">
    <property type="term" value="P:tRNA processing"/>
    <property type="evidence" value="ECO:0007669"/>
    <property type="project" value="UniProtKB-KW"/>
</dbReference>
<dbReference type="CDD" id="cd06134">
    <property type="entry name" value="RNaseT"/>
    <property type="match status" value="1"/>
</dbReference>
<dbReference type="FunFam" id="3.30.420.10:FF:000009">
    <property type="entry name" value="Ribonuclease T"/>
    <property type="match status" value="1"/>
</dbReference>
<dbReference type="Gene3D" id="3.30.420.10">
    <property type="entry name" value="Ribonuclease H-like superfamily/Ribonuclease H"/>
    <property type="match status" value="1"/>
</dbReference>
<dbReference type="HAMAP" id="MF_00157">
    <property type="entry name" value="RNase_T"/>
    <property type="match status" value="1"/>
</dbReference>
<dbReference type="InterPro" id="IPR013520">
    <property type="entry name" value="Exonuclease_RNaseT/DNA_pol3"/>
</dbReference>
<dbReference type="InterPro" id="IPR005987">
    <property type="entry name" value="RNase_T"/>
</dbReference>
<dbReference type="InterPro" id="IPR012337">
    <property type="entry name" value="RNaseH-like_sf"/>
</dbReference>
<dbReference type="InterPro" id="IPR036397">
    <property type="entry name" value="RNaseH_sf"/>
</dbReference>
<dbReference type="NCBIfam" id="TIGR01298">
    <property type="entry name" value="RNaseT"/>
    <property type="match status" value="1"/>
</dbReference>
<dbReference type="PANTHER" id="PTHR30231">
    <property type="entry name" value="DNA POLYMERASE III SUBUNIT EPSILON"/>
    <property type="match status" value="1"/>
</dbReference>
<dbReference type="PANTHER" id="PTHR30231:SF2">
    <property type="entry name" value="RIBONUCLEASE T"/>
    <property type="match status" value="1"/>
</dbReference>
<dbReference type="Pfam" id="PF00929">
    <property type="entry name" value="RNase_T"/>
    <property type="match status" value="1"/>
</dbReference>
<dbReference type="SMART" id="SM00479">
    <property type="entry name" value="EXOIII"/>
    <property type="match status" value="1"/>
</dbReference>
<dbReference type="SUPFAM" id="SSF53098">
    <property type="entry name" value="Ribonuclease H-like"/>
    <property type="match status" value="1"/>
</dbReference>
<keyword id="KW-0269">Exonuclease</keyword>
<keyword id="KW-0378">Hydrolase</keyword>
<keyword id="KW-0460">Magnesium</keyword>
<keyword id="KW-0479">Metal-binding</keyword>
<keyword id="KW-0540">Nuclease</keyword>
<keyword id="KW-0819">tRNA processing</keyword>
<comment type="function">
    <text evidence="1">Trims short 3' overhangs of a variety of RNA species, leaving a one or two nucleotide 3' overhang. Responsible for the end-turnover of tRNA: specifically removes the terminal AMP residue from uncharged tRNA (tRNA-C-C-A). Also appears to be involved in tRNA biosynthesis.</text>
</comment>
<comment type="cofactor">
    <cofactor evidence="1">
        <name>Mg(2+)</name>
        <dbReference type="ChEBI" id="CHEBI:18420"/>
    </cofactor>
    <text evidence="1">Binds two Mg(2+) per subunit. The active form of the enzyme binds two Mg(2+) ions in its active site. The first Mg(2+) forms only one salt bridge with the protein.</text>
</comment>
<comment type="subunit">
    <text evidence="1">Homodimer.</text>
</comment>
<comment type="similarity">
    <text evidence="1">Belongs to the RNase T family.</text>
</comment>
<organism>
    <name type="scientific">Vibrio parahaemolyticus serotype O3:K6 (strain RIMD 2210633)</name>
    <dbReference type="NCBI Taxonomy" id="223926"/>
    <lineage>
        <taxon>Bacteria</taxon>
        <taxon>Pseudomonadati</taxon>
        <taxon>Pseudomonadota</taxon>
        <taxon>Gammaproteobacteria</taxon>
        <taxon>Vibrionales</taxon>
        <taxon>Vibrionaceae</taxon>
        <taxon>Vibrio</taxon>
    </lineage>
</organism>
<evidence type="ECO:0000255" key="1">
    <source>
        <dbReference type="HAMAP-Rule" id="MF_00157"/>
    </source>
</evidence>
<evidence type="ECO:0000305" key="2"/>
<feature type="chain" id="PRO_0000208978" description="Ribonuclease T">
    <location>
        <begin position="1"/>
        <end position="214"/>
    </location>
</feature>
<feature type="domain" description="Exonuclease" evidence="1">
    <location>
        <begin position="20"/>
        <end position="195"/>
    </location>
</feature>
<feature type="active site" description="Proton donor/acceptor" evidence="1">
    <location>
        <position position="182"/>
    </location>
</feature>
<feature type="binding site" evidence="1">
    <location>
        <position position="23"/>
    </location>
    <ligand>
        <name>Mg(2+)</name>
        <dbReference type="ChEBI" id="CHEBI:18420"/>
        <label>1</label>
        <note>catalytic</note>
    </ligand>
</feature>
<feature type="binding site" evidence="1">
    <location>
        <position position="23"/>
    </location>
    <ligand>
        <name>Mg(2+)</name>
        <dbReference type="ChEBI" id="CHEBI:18420"/>
        <label>2</label>
        <note>catalytic</note>
    </ligand>
</feature>
<feature type="binding site" evidence="1">
    <location>
        <position position="25"/>
    </location>
    <ligand>
        <name>Mg(2+)</name>
        <dbReference type="ChEBI" id="CHEBI:18420"/>
        <label>2</label>
        <note>catalytic</note>
    </ligand>
</feature>
<feature type="binding site" evidence="1">
    <location>
        <position position="182"/>
    </location>
    <ligand>
        <name>Mg(2+)</name>
        <dbReference type="ChEBI" id="CHEBI:18420"/>
        <label>2</label>
        <note>catalytic</note>
    </ligand>
</feature>
<feature type="binding site" evidence="1">
    <location>
        <position position="187"/>
    </location>
    <ligand>
        <name>Mg(2+)</name>
        <dbReference type="ChEBI" id="CHEBI:18420"/>
        <label>2</label>
        <note>catalytic</note>
    </ligand>
</feature>
<feature type="site" description="Important for substrate binding and specificity" evidence="1">
    <location>
        <position position="29"/>
    </location>
</feature>
<feature type="site" description="Important for substrate binding and specificity" evidence="1">
    <location>
        <position position="77"/>
    </location>
</feature>
<feature type="site" description="Important for substrate binding and specificity" evidence="1">
    <location>
        <position position="125"/>
    </location>
</feature>
<feature type="site" description="Important for substrate binding and specificity" evidence="1">
    <location>
        <position position="147"/>
    </location>
</feature>
<feature type="sequence conflict" description="In Ref. 1; AAA21572." evidence="2" ref="1">
    <original>V</original>
    <variation>I</variation>
    <location>
        <position position="91"/>
    </location>
</feature>
<feature type="sequence conflict" description="In Ref. 1; AAA21572." evidence="2" ref="1">
    <original>N</original>
    <variation>D</variation>
    <location>
        <position position="212"/>
    </location>
</feature>
<reference key="1">
    <citation type="journal article" date="1994" name="J. Bacteriol.">
        <title>MotY, a component of the sodium-type flagellar motor.</title>
        <authorList>
            <person name="McCarter L.L."/>
        </authorList>
    </citation>
    <scope>NUCLEOTIDE SEQUENCE [GENOMIC DNA]</scope>
    <source>
        <strain>BB22</strain>
    </source>
</reference>
<reference key="2">
    <citation type="journal article" date="2003" name="Lancet">
        <title>Genome sequence of Vibrio parahaemolyticus: a pathogenic mechanism distinct from that of V. cholerae.</title>
        <authorList>
            <person name="Makino K."/>
            <person name="Oshima K."/>
            <person name="Kurokawa K."/>
            <person name="Yokoyama K."/>
            <person name="Uda T."/>
            <person name="Tagomori K."/>
            <person name="Iijima Y."/>
            <person name="Najima M."/>
            <person name="Nakano M."/>
            <person name="Yamashita A."/>
            <person name="Kubota Y."/>
            <person name="Kimura S."/>
            <person name="Yasunaga T."/>
            <person name="Honda T."/>
            <person name="Shinagawa H."/>
            <person name="Hattori M."/>
            <person name="Iida T."/>
        </authorList>
    </citation>
    <scope>NUCLEOTIDE SEQUENCE [LARGE SCALE GENOMIC DNA]</scope>
    <source>
        <strain>RIMD 2210633</strain>
    </source>
</reference>
<sequence>MTIENEALTLKKRFRGYFPVVVDVETAGFNAQTDALLEICAVTLRMDEEGVLHPASTIHFHIEPFEGANLEKEALEFNGIRDPFSPLRGAVSEQEALKEIYKLIRKEQKASDCSRAIMVAHNAAFDLSFVNAANERCKLKRVPFHPFATFDTATLSGLAYGQTVLAKACKTAGMEFDNREAHSALYDTQKTAELFCGIVNKWKALGGWPLVNEE</sequence>
<accession>P46232</accession>
<gene>
    <name evidence="1" type="primary">rnt</name>
    <name type="ordered locus">VP2114</name>
</gene>
<protein>
    <recommendedName>
        <fullName evidence="1">Ribonuclease T</fullName>
        <ecNumber evidence="1">3.1.13.-</ecNumber>
    </recommendedName>
    <alternativeName>
        <fullName evidence="1">Exoribonuclease T</fullName>
        <shortName evidence="1">RNase T</shortName>
    </alternativeName>
</protein>
<proteinExistence type="inferred from homology"/>
<name>RNT_VIBPA</name>